<feature type="chain" id="PRO_0000406243" description="FAD synthase">
    <location>
        <begin position="1"/>
        <end position="147"/>
    </location>
</feature>
<feature type="binding site" evidence="1">
    <location>
        <begin position="13"/>
        <end position="14"/>
    </location>
    <ligand>
        <name>ATP</name>
        <dbReference type="ChEBI" id="CHEBI:30616"/>
    </ligand>
</feature>
<feature type="binding site" evidence="1">
    <location>
        <begin position="18"/>
        <end position="21"/>
    </location>
    <ligand>
        <name>ATP</name>
        <dbReference type="ChEBI" id="CHEBI:30616"/>
    </ligand>
</feature>
<feature type="binding site" evidence="1">
    <location>
        <position position="100"/>
    </location>
    <ligand>
        <name>ATP</name>
        <dbReference type="ChEBI" id="CHEBI:30616"/>
    </ligand>
</feature>
<feature type="binding site" evidence="1">
    <location>
        <position position="127"/>
    </location>
    <ligand>
        <name>ATP</name>
        <dbReference type="ChEBI" id="CHEBI:30616"/>
    </ligand>
</feature>
<accession>B1L7J8</accession>
<organism>
    <name type="scientific">Korarchaeum cryptofilum (strain OPF8)</name>
    <dbReference type="NCBI Taxonomy" id="374847"/>
    <lineage>
        <taxon>Archaea</taxon>
        <taxon>Thermoproteota</taxon>
        <taxon>Candidatus Korarchaeia</taxon>
        <taxon>Candidatus Korarchaeales</taxon>
        <taxon>Candidatus Korarchaeaceae</taxon>
        <taxon>Candidatus Korarchaeum</taxon>
    </lineage>
</organism>
<dbReference type="EC" id="2.7.7.2" evidence="1"/>
<dbReference type="EMBL" id="CP000968">
    <property type="protein sequence ID" value="ACB06825.1"/>
    <property type="molecule type" value="Genomic_DNA"/>
</dbReference>
<dbReference type="SMR" id="B1L7J8"/>
<dbReference type="FunCoup" id="B1L7J8">
    <property type="interactions" value="5"/>
</dbReference>
<dbReference type="STRING" id="374847.Kcr_0065"/>
<dbReference type="EnsemblBacteria" id="ACB06825">
    <property type="protein sequence ID" value="ACB06825"/>
    <property type="gene ID" value="Kcr_0065"/>
</dbReference>
<dbReference type="KEGG" id="kcr:Kcr_0065"/>
<dbReference type="eggNOG" id="arCOG01222">
    <property type="taxonomic scope" value="Archaea"/>
</dbReference>
<dbReference type="HOGENOM" id="CLU_034585_2_1_2"/>
<dbReference type="InParanoid" id="B1L7J8"/>
<dbReference type="PhylomeDB" id="B1L7J8"/>
<dbReference type="UniPathway" id="UPA00277">
    <property type="reaction ID" value="UER00407"/>
</dbReference>
<dbReference type="Proteomes" id="UP000001686">
    <property type="component" value="Chromosome"/>
</dbReference>
<dbReference type="GO" id="GO:0005524">
    <property type="term" value="F:ATP binding"/>
    <property type="evidence" value="ECO:0007669"/>
    <property type="project" value="UniProtKB-UniRule"/>
</dbReference>
<dbReference type="GO" id="GO:0003919">
    <property type="term" value="F:FMN adenylyltransferase activity"/>
    <property type="evidence" value="ECO:0007669"/>
    <property type="project" value="UniProtKB-UniRule"/>
</dbReference>
<dbReference type="GO" id="GO:0006747">
    <property type="term" value="P:FAD biosynthetic process"/>
    <property type="evidence" value="ECO:0007669"/>
    <property type="project" value="UniProtKB-UniRule"/>
</dbReference>
<dbReference type="GO" id="GO:0046444">
    <property type="term" value="P:FMN metabolic process"/>
    <property type="evidence" value="ECO:0007669"/>
    <property type="project" value="UniProtKB-UniRule"/>
</dbReference>
<dbReference type="Gene3D" id="3.40.50.620">
    <property type="entry name" value="HUPs"/>
    <property type="match status" value="1"/>
</dbReference>
<dbReference type="HAMAP" id="MF_02115">
    <property type="entry name" value="FAD_synth_arch"/>
    <property type="match status" value="1"/>
</dbReference>
<dbReference type="InterPro" id="IPR050385">
    <property type="entry name" value="Archaeal_FAD_synthase"/>
</dbReference>
<dbReference type="InterPro" id="IPR004821">
    <property type="entry name" value="Cyt_trans-like"/>
</dbReference>
<dbReference type="InterPro" id="IPR024902">
    <property type="entry name" value="FAD_synth_RibL"/>
</dbReference>
<dbReference type="InterPro" id="IPR014729">
    <property type="entry name" value="Rossmann-like_a/b/a_fold"/>
</dbReference>
<dbReference type="NCBIfam" id="TIGR00125">
    <property type="entry name" value="cyt_tran_rel"/>
    <property type="match status" value="1"/>
</dbReference>
<dbReference type="PANTHER" id="PTHR43793">
    <property type="entry name" value="FAD SYNTHASE"/>
    <property type="match status" value="1"/>
</dbReference>
<dbReference type="PANTHER" id="PTHR43793:SF1">
    <property type="entry name" value="FAD SYNTHASE"/>
    <property type="match status" value="1"/>
</dbReference>
<dbReference type="Pfam" id="PF01467">
    <property type="entry name" value="CTP_transf_like"/>
    <property type="match status" value="1"/>
</dbReference>
<dbReference type="SUPFAM" id="SSF52374">
    <property type="entry name" value="Nucleotidylyl transferase"/>
    <property type="match status" value="1"/>
</dbReference>
<proteinExistence type="inferred from homology"/>
<reference key="1">
    <citation type="journal article" date="2008" name="Proc. Natl. Acad. Sci. U.S.A.">
        <title>A korarchaeal genome reveals new insights into the evolution of the Archaea.</title>
        <authorList>
            <person name="Elkins J.G."/>
            <person name="Podar M."/>
            <person name="Graham D.E."/>
            <person name="Makarova K.S."/>
            <person name="Wolf Y."/>
            <person name="Randau L."/>
            <person name="Hedlund B.P."/>
            <person name="Brochier-Armanet C."/>
            <person name="Kunin V."/>
            <person name="Anderson I."/>
            <person name="Lapidus A."/>
            <person name="Goltsman E."/>
            <person name="Barry K."/>
            <person name="Koonin E.V."/>
            <person name="Hugenholtz P."/>
            <person name="Kyrpides N."/>
            <person name="Wanner G."/>
            <person name="Richardson P."/>
            <person name="Keller M."/>
            <person name="Stetter K.O."/>
        </authorList>
    </citation>
    <scope>NUCLEOTIDE SEQUENCE [LARGE SCALE GENOMIC DNA]</scope>
    <source>
        <strain>OPF8</strain>
    </source>
</reference>
<comment type="function">
    <text evidence="1">Catalyzes the transfer of the AMP portion of ATP to flavin mononucleotide (FMN) to produce flavin adenine dinucleotide (FAD) coenzyme.</text>
</comment>
<comment type="catalytic activity">
    <reaction evidence="1">
        <text>FMN + ATP + H(+) = FAD + diphosphate</text>
        <dbReference type="Rhea" id="RHEA:17237"/>
        <dbReference type="ChEBI" id="CHEBI:15378"/>
        <dbReference type="ChEBI" id="CHEBI:30616"/>
        <dbReference type="ChEBI" id="CHEBI:33019"/>
        <dbReference type="ChEBI" id="CHEBI:57692"/>
        <dbReference type="ChEBI" id="CHEBI:58210"/>
        <dbReference type="EC" id="2.7.7.2"/>
    </reaction>
</comment>
<comment type="cofactor">
    <cofactor evidence="1">
        <name>a divalent metal cation</name>
        <dbReference type="ChEBI" id="CHEBI:60240"/>
    </cofactor>
</comment>
<comment type="pathway">
    <text evidence="1">Cofactor biosynthesis; FAD biosynthesis; FAD from FMN: step 1/1.</text>
</comment>
<comment type="subunit">
    <text evidence="1">Homodimer.</text>
</comment>
<comment type="similarity">
    <text evidence="1">Belongs to the archaeal FAD synthase family.</text>
</comment>
<protein>
    <recommendedName>
        <fullName evidence="1">FAD synthase</fullName>
        <ecNumber evidence="1">2.7.7.2</ecNumber>
    </recommendedName>
    <alternativeName>
        <fullName evidence="1">FMN adenylyltransferase</fullName>
    </alternativeName>
    <alternativeName>
        <fullName evidence="1">Flavin adenine dinucleotide synthase</fullName>
    </alternativeName>
</protein>
<sequence length="147" mass="16874">MLEMGRRVMVAGTFDIIHEGHIKMLWSAKSLAGDDGELVVVVARDENVRKYKKREPILEESIRAYIVKNLKPVDRVVLGERDPIESVLKLRPDVIALGYDQWADENWLREELLKRGLNVEIVRLPRFGDSSSSSIVRRVIKLFCSSE</sequence>
<evidence type="ECO:0000255" key="1">
    <source>
        <dbReference type="HAMAP-Rule" id="MF_02115"/>
    </source>
</evidence>
<name>RIBL_KORCO</name>
<gene>
    <name evidence="1" type="primary">ribL</name>
    <name type="ordered locus">Kcr_0065</name>
</gene>
<keyword id="KW-0067">ATP-binding</keyword>
<keyword id="KW-0274">FAD</keyword>
<keyword id="KW-0285">Flavoprotein</keyword>
<keyword id="KW-0288">FMN</keyword>
<keyword id="KW-0547">Nucleotide-binding</keyword>
<keyword id="KW-0548">Nucleotidyltransferase</keyword>
<keyword id="KW-1185">Reference proteome</keyword>
<keyword id="KW-0808">Transferase</keyword>